<feature type="chain" id="PRO_1000055581" description="Large ribosomal subunit protein uL14">
    <location>
        <begin position="1"/>
        <end position="122"/>
    </location>
</feature>
<comment type="function">
    <text evidence="1">Binds to 23S rRNA. Forms part of two intersubunit bridges in the 70S ribosome.</text>
</comment>
<comment type="subunit">
    <text evidence="1">Part of the 50S ribosomal subunit. Forms a cluster with proteins L3 and L19. In the 70S ribosome, L14 and L19 interact and together make contacts with the 16S rRNA in bridges B5 and B8.</text>
</comment>
<comment type="similarity">
    <text evidence="1">Belongs to the universal ribosomal protein uL14 family.</text>
</comment>
<sequence>MIQQESRLRVADNTGAREILCIRVLGGSGRRYAGIGDIIVGTVKDALPGAGVKRGDVVKAVVVRTTKERRRPDGSYIRFDENAAVLIRDGGDPRGTRIFGPVGRELRDKKFMKIISLAPEVL</sequence>
<evidence type="ECO:0000255" key="1">
    <source>
        <dbReference type="HAMAP-Rule" id="MF_01367"/>
    </source>
</evidence>
<evidence type="ECO:0000305" key="2"/>
<accession>Q0RRR1</accession>
<keyword id="KW-1185">Reference proteome</keyword>
<keyword id="KW-0687">Ribonucleoprotein</keyword>
<keyword id="KW-0689">Ribosomal protein</keyword>
<keyword id="KW-0694">RNA-binding</keyword>
<keyword id="KW-0699">rRNA-binding</keyword>
<reference key="1">
    <citation type="journal article" date="2007" name="Genome Res.">
        <title>Genome characteristics of facultatively symbiotic Frankia sp. strains reflect host range and host plant biogeography.</title>
        <authorList>
            <person name="Normand P."/>
            <person name="Lapierre P."/>
            <person name="Tisa L.S."/>
            <person name="Gogarten J.P."/>
            <person name="Alloisio N."/>
            <person name="Bagnarol E."/>
            <person name="Bassi C.A."/>
            <person name="Berry A.M."/>
            <person name="Bickhart D.M."/>
            <person name="Choisne N."/>
            <person name="Couloux A."/>
            <person name="Cournoyer B."/>
            <person name="Cruveiller S."/>
            <person name="Daubin V."/>
            <person name="Demange N."/>
            <person name="Francino M.P."/>
            <person name="Goltsman E."/>
            <person name="Huang Y."/>
            <person name="Kopp O.R."/>
            <person name="Labarre L."/>
            <person name="Lapidus A."/>
            <person name="Lavire C."/>
            <person name="Marechal J."/>
            <person name="Martinez M."/>
            <person name="Mastronunzio J.E."/>
            <person name="Mullin B.C."/>
            <person name="Niemann J."/>
            <person name="Pujic P."/>
            <person name="Rawnsley T."/>
            <person name="Rouy Z."/>
            <person name="Schenowitz C."/>
            <person name="Sellstedt A."/>
            <person name="Tavares F."/>
            <person name="Tomkins J.P."/>
            <person name="Vallenet D."/>
            <person name="Valverde C."/>
            <person name="Wall L.G."/>
            <person name="Wang Y."/>
            <person name="Medigue C."/>
            <person name="Benson D.R."/>
        </authorList>
    </citation>
    <scope>NUCLEOTIDE SEQUENCE [LARGE SCALE GENOMIC DNA]</scope>
    <source>
        <strain>DSM 45986 / CECT 9034 / ACN14a</strain>
    </source>
</reference>
<name>RL14_FRAAA</name>
<dbReference type="EMBL" id="CT573213">
    <property type="protein sequence ID" value="CAJ59756.1"/>
    <property type="molecule type" value="Genomic_DNA"/>
</dbReference>
<dbReference type="RefSeq" id="WP_009740518.1">
    <property type="nucleotide sequence ID" value="NC_008278.1"/>
</dbReference>
<dbReference type="SMR" id="Q0RRR1"/>
<dbReference type="STRING" id="326424.FRAAL1091"/>
<dbReference type="KEGG" id="fal:FRAAL1091"/>
<dbReference type="eggNOG" id="COG0093">
    <property type="taxonomic scope" value="Bacteria"/>
</dbReference>
<dbReference type="HOGENOM" id="CLU_095071_2_1_11"/>
<dbReference type="OrthoDB" id="9806379at2"/>
<dbReference type="Proteomes" id="UP000000657">
    <property type="component" value="Chromosome"/>
</dbReference>
<dbReference type="GO" id="GO:0022625">
    <property type="term" value="C:cytosolic large ribosomal subunit"/>
    <property type="evidence" value="ECO:0007669"/>
    <property type="project" value="TreeGrafter"/>
</dbReference>
<dbReference type="GO" id="GO:0070180">
    <property type="term" value="F:large ribosomal subunit rRNA binding"/>
    <property type="evidence" value="ECO:0007669"/>
    <property type="project" value="TreeGrafter"/>
</dbReference>
<dbReference type="GO" id="GO:0003735">
    <property type="term" value="F:structural constituent of ribosome"/>
    <property type="evidence" value="ECO:0007669"/>
    <property type="project" value="InterPro"/>
</dbReference>
<dbReference type="GO" id="GO:0006412">
    <property type="term" value="P:translation"/>
    <property type="evidence" value="ECO:0007669"/>
    <property type="project" value="UniProtKB-UniRule"/>
</dbReference>
<dbReference type="CDD" id="cd00337">
    <property type="entry name" value="Ribosomal_uL14"/>
    <property type="match status" value="1"/>
</dbReference>
<dbReference type="FunFam" id="2.40.150.20:FF:000001">
    <property type="entry name" value="50S ribosomal protein L14"/>
    <property type="match status" value="1"/>
</dbReference>
<dbReference type="Gene3D" id="2.40.150.20">
    <property type="entry name" value="Ribosomal protein L14"/>
    <property type="match status" value="1"/>
</dbReference>
<dbReference type="HAMAP" id="MF_01367">
    <property type="entry name" value="Ribosomal_uL14"/>
    <property type="match status" value="1"/>
</dbReference>
<dbReference type="InterPro" id="IPR000218">
    <property type="entry name" value="Ribosomal_uL14"/>
</dbReference>
<dbReference type="InterPro" id="IPR005745">
    <property type="entry name" value="Ribosomal_uL14_bac-type"/>
</dbReference>
<dbReference type="InterPro" id="IPR019972">
    <property type="entry name" value="Ribosomal_uL14_CS"/>
</dbReference>
<dbReference type="InterPro" id="IPR036853">
    <property type="entry name" value="Ribosomal_uL14_sf"/>
</dbReference>
<dbReference type="NCBIfam" id="TIGR01067">
    <property type="entry name" value="rplN_bact"/>
    <property type="match status" value="1"/>
</dbReference>
<dbReference type="PANTHER" id="PTHR11761">
    <property type="entry name" value="50S/60S RIBOSOMAL PROTEIN L14/L23"/>
    <property type="match status" value="1"/>
</dbReference>
<dbReference type="PANTHER" id="PTHR11761:SF3">
    <property type="entry name" value="LARGE RIBOSOMAL SUBUNIT PROTEIN UL14M"/>
    <property type="match status" value="1"/>
</dbReference>
<dbReference type="Pfam" id="PF00238">
    <property type="entry name" value="Ribosomal_L14"/>
    <property type="match status" value="1"/>
</dbReference>
<dbReference type="SMART" id="SM01374">
    <property type="entry name" value="Ribosomal_L14"/>
    <property type="match status" value="1"/>
</dbReference>
<dbReference type="SUPFAM" id="SSF50193">
    <property type="entry name" value="Ribosomal protein L14"/>
    <property type="match status" value="1"/>
</dbReference>
<dbReference type="PROSITE" id="PS00049">
    <property type="entry name" value="RIBOSOMAL_L14"/>
    <property type="match status" value="1"/>
</dbReference>
<proteinExistence type="inferred from homology"/>
<organism>
    <name type="scientific">Frankia alni (strain DSM 45986 / CECT 9034 / ACN14a)</name>
    <dbReference type="NCBI Taxonomy" id="326424"/>
    <lineage>
        <taxon>Bacteria</taxon>
        <taxon>Bacillati</taxon>
        <taxon>Actinomycetota</taxon>
        <taxon>Actinomycetes</taxon>
        <taxon>Frankiales</taxon>
        <taxon>Frankiaceae</taxon>
        <taxon>Frankia</taxon>
    </lineage>
</organism>
<gene>
    <name evidence="1" type="primary">rplN</name>
    <name type="ordered locus">FRAAL1091</name>
</gene>
<protein>
    <recommendedName>
        <fullName evidence="1">Large ribosomal subunit protein uL14</fullName>
    </recommendedName>
    <alternativeName>
        <fullName evidence="2">50S ribosomal protein L14</fullName>
    </alternativeName>
</protein>